<dbReference type="EMBL" id="Z47068">
    <property type="protein sequence ID" value="CAA87331.1"/>
    <property type="molecule type" value="Genomic_DNA"/>
</dbReference>
<dbReference type="EMBL" id="Z47068">
    <property type="protein sequence ID" value="CAB54215.1"/>
    <property type="molecule type" value="Genomic_DNA"/>
</dbReference>
<dbReference type="PIR" id="T20987">
    <property type="entry name" value="T20987"/>
</dbReference>
<dbReference type="PIR" id="T20990">
    <property type="entry name" value="T20990"/>
</dbReference>
<dbReference type="RefSeq" id="NP_001370065.1">
    <molecule id="Q10033-2"/>
    <property type="nucleotide sequence ID" value="NM_001383628.2"/>
</dbReference>
<dbReference type="RefSeq" id="NP_509631.1">
    <molecule id="Q10033-1"/>
    <property type="nucleotide sequence ID" value="NM_077230.9"/>
</dbReference>
<dbReference type="RefSeq" id="NP_509632.1">
    <property type="nucleotide sequence ID" value="NM_077231.3"/>
</dbReference>
<dbReference type="SMR" id="Q10033"/>
<dbReference type="BioGRID" id="46100">
    <property type="interactions" value="1"/>
</dbReference>
<dbReference type="FunCoup" id="Q10033">
    <property type="interactions" value="305"/>
</dbReference>
<dbReference type="STRING" id="6239.F15G9.1a.1"/>
<dbReference type="iPTMnet" id="Q10033"/>
<dbReference type="PaxDb" id="6239-F15G9.1a"/>
<dbReference type="PeptideAtlas" id="Q10033"/>
<dbReference type="EnsemblMetazoa" id="F15G9.1a.1">
    <molecule id="Q10033-1"/>
    <property type="protein sequence ID" value="F15G9.1a.1"/>
    <property type="gene ID" value="WBGene00008865"/>
</dbReference>
<dbReference type="EnsemblMetazoa" id="F15G9.1b.1">
    <molecule id="Q10033-2"/>
    <property type="protein sequence ID" value="F15G9.1b.1"/>
    <property type="gene ID" value="WBGene00008865"/>
</dbReference>
<dbReference type="EnsemblMetazoa" id="F15G9.1b.2">
    <molecule id="Q10033-2"/>
    <property type="protein sequence ID" value="F15G9.1b.2"/>
    <property type="gene ID" value="WBGene00008865"/>
</dbReference>
<dbReference type="EnsemblMetazoa" id="F15G9.1b.3">
    <molecule id="Q10033-2"/>
    <property type="protein sequence ID" value="F15G9.1b.3"/>
    <property type="gene ID" value="WBGene00008865"/>
</dbReference>
<dbReference type="GeneID" id="181184"/>
<dbReference type="KEGG" id="cel:CELE_F15G9.1"/>
<dbReference type="UCSC" id="F15G9.1a">
    <molecule id="Q10033-1"/>
    <property type="organism name" value="c. elegans"/>
</dbReference>
<dbReference type="AGR" id="WB:WBGene00008865"/>
<dbReference type="CTD" id="181184"/>
<dbReference type="WormBase" id="F15G9.1a">
    <molecule id="Q10033-1"/>
    <property type="protein sequence ID" value="CE01549"/>
    <property type="gene ID" value="WBGene00008865"/>
</dbReference>
<dbReference type="WormBase" id="F15G9.1b">
    <molecule id="Q10033-2"/>
    <property type="protein sequence ID" value="CE23660"/>
    <property type="gene ID" value="WBGene00008865"/>
</dbReference>
<dbReference type="eggNOG" id="ENOG502R6EB">
    <property type="taxonomic scope" value="Eukaryota"/>
</dbReference>
<dbReference type="HOGENOM" id="CLU_087089_0_0_1"/>
<dbReference type="InParanoid" id="Q10033"/>
<dbReference type="OMA" id="KVSTHNF"/>
<dbReference type="OrthoDB" id="5852206at2759"/>
<dbReference type="PRO" id="PR:Q10033"/>
<dbReference type="Proteomes" id="UP000001940">
    <property type="component" value="Chromosome X"/>
</dbReference>
<dbReference type="Bgee" id="WBGene00008865">
    <property type="expression patterns" value="Expressed in pharyngeal muscle cell (C elegans) and 4 other cell types or tissues"/>
</dbReference>
<dbReference type="ExpressionAtlas" id="Q10033">
    <property type="expression patterns" value="baseline and differential"/>
</dbReference>
<dbReference type="GO" id="GO:0055120">
    <property type="term" value="C:striated muscle dense body"/>
    <property type="evidence" value="ECO:0007005"/>
    <property type="project" value="WormBase"/>
</dbReference>
<dbReference type="GO" id="GO:0005865">
    <property type="term" value="C:striated muscle thin filament"/>
    <property type="evidence" value="ECO:0007005"/>
    <property type="project" value="WormBase"/>
</dbReference>
<gene>
    <name type="ORF">F15G9.1</name>
</gene>
<evidence type="ECO:0000256" key="1">
    <source>
        <dbReference type="SAM" id="MobiDB-lite"/>
    </source>
</evidence>
<evidence type="ECO:0000305" key="2"/>
<comment type="alternative products">
    <event type="alternative splicing"/>
    <isoform>
        <id>Q10033-1</id>
        <name>a</name>
        <sequence type="displayed"/>
    </isoform>
    <isoform>
        <id>Q10033-2</id>
        <name>b</name>
        <sequence type="described" ref="VSP_002445"/>
    </isoform>
</comment>
<accession>Q10033</accession>
<accession>Q9U3J1</accession>
<feature type="chain" id="PRO_0000065297" description="Uncharacterized protein F15G9.1">
    <location>
        <begin position="1"/>
        <end position="279"/>
    </location>
</feature>
<feature type="region of interest" description="Disordered" evidence="1">
    <location>
        <begin position="1"/>
        <end position="111"/>
    </location>
</feature>
<feature type="region of interest" description="Disordered" evidence="1">
    <location>
        <begin position="137"/>
        <end position="233"/>
    </location>
</feature>
<feature type="compositionally biased region" description="Low complexity" evidence="1">
    <location>
        <begin position="1"/>
        <end position="29"/>
    </location>
</feature>
<feature type="compositionally biased region" description="Basic and acidic residues" evidence="1">
    <location>
        <begin position="30"/>
        <end position="44"/>
    </location>
</feature>
<feature type="compositionally biased region" description="Low complexity" evidence="1">
    <location>
        <begin position="45"/>
        <end position="59"/>
    </location>
</feature>
<feature type="compositionally biased region" description="Acidic residues" evidence="1">
    <location>
        <begin position="142"/>
        <end position="153"/>
    </location>
</feature>
<feature type="compositionally biased region" description="Low complexity" evidence="1">
    <location>
        <begin position="170"/>
        <end position="186"/>
    </location>
</feature>
<feature type="compositionally biased region" description="Polar residues" evidence="1">
    <location>
        <begin position="189"/>
        <end position="205"/>
    </location>
</feature>
<feature type="compositionally biased region" description="Basic and acidic residues" evidence="1">
    <location>
        <begin position="221"/>
        <end position="233"/>
    </location>
</feature>
<feature type="splice variant" id="VSP_002445" description="In isoform b." evidence="2">
    <location>
        <begin position="1"/>
        <end position="74"/>
    </location>
</feature>
<organism>
    <name type="scientific">Caenorhabditis elegans</name>
    <dbReference type="NCBI Taxonomy" id="6239"/>
    <lineage>
        <taxon>Eukaryota</taxon>
        <taxon>Metazoa</taxon>
        <taxon>Ecdysozoa</taxon>
        <taxon>Nematoda</taxon>
        <taxon>Chromadorea</taxon>
        <taxon>Rhabditida</taxon>
        <taxon>Rhabditina</taxon>
        <taxon>Rhabditomorpha</taxon>
        <taxon>Rhabditoidea</taxon>
        <taxon>Rhabditidae</taxon>
        <taxon>Peloderinae</taxon>
        <taxon>Caenorhabditis</taxon>
    </lineage>
</organism>
<keyword id="KW-0025">Alternative splicing</keyword>
<keyword id="KW-1185">Reference proteome</keyword>
<protein>
    <recommendedName>
        <fullName>Uncharacterized protein F15G9.1</fullName>
    </recommendedName>
</protein>
<sequence>MSSRYTSSYTPSSRYGSGWDYSSSYSSSRTSRDRDTGSYRDRDYSSTSYTSTRPRYSTYASKYSTDLGKSTDKGMDDYSAAPIAKDEIEELSYDAKTPTTPTEETVDAPREVLQESQISDFVEEDDDQQTEVEEVKLTLASEPEESEEEEDDEDVRKAQELLAASTQIRESSPVSSPVKEVSSAASLFANDNGNETENRTPSPTVLNAKKLGGIPWPPKSSDVKKEGGDAEALPKKRVSDLIARFNTGVVEESKKTDDAYKNEYGAGTNVGKVSTHNFA</sequence>
<reference key="1">
    <citation type="journal article" date="1998" name="Science">
        <title>Genome sequence of the nematode C. elegans: a platform for investigating biology.</title>
        <authorList>
            <consortium name="The C. elegans sequencing consortium"/>
        </authorList>
    </citation>
    <scope>NUCLEOTIDE SEQUENCE [LARGE SCALE GENOMIC DNA]</scope>
    <scope>ALTERNATIVE SPLICING</scope>
    <source>
        <strain>Bristol N2</strain>
    </source>
</reference>
<proteinExistence type="predicted"/>
<name>YSI1_CAEEL</name>